<comment type="function">
    <text evidence="1">Produces ATP from ADP in the presence of a proton gradient across the membrane. The alpha chain is a regulatory subunit.</text>
</comment>
<comment type="catalytic activity">
    <reaction evidence="1">
        <text>ATP + H2O + 4 H(+)(in) = ADP + phosphate + 5 H(+)(out)</text>
        <dbReference type="Rhea" id="RHEA:57720"/>
        <dbReference type="ChEBI" id="CHEBI:15377"/>
        <dbReference type="ChEBI" id="CHEBI:15378"/>
        <dbReference type="ChEBI" id="CHEBI:30616"/>
        <dbReference type="ChEBI" id="CHEBI:43474"/>
        <dbReference type="ChEBI" id="CHEBI:456216"/>
        <dbReference type="EC" id="7.1.2.2"/>
    </reaction>
</comment>
<comment type="subunit">
    <text evidence="1">F-type ATPases have 2 components, CF(1) - the catalytic core - and CF(0) - the membrane proton channel. CF(1) has five subunits: alpha(3), beta(3), gamma(1), delta(1), epsilon(1). CF(0) has three main subunits: a(1), b(2) and c(9-12). The alpha and beta chains form an alternating ring which encloses part of the gamma chain. CF(1) is attached to CF(0) by a central stalk formed by the gamma and epsilon chains, while a peripheral stalk is formed by the delta and b chains.</text>
</comment>
<comment type="subcellular location">
    <subcellularLocation>
        <location evidence="1">Cell inner membrane</location>
        <topology evidence="1">Peripheral membrane protein</topology>
    </subcellularLocation>
</comment>
<comment type="similarity">
    <text evidence="1">Belongs to the ATPase alpha/beta chains family.</text>
</comment>
<protein>
    <recommendedName>
        <fullName evidence="1">ATP synthase subunit alpha</fullName>
        <ecNumber evidence="1">7.1.2.2</ecNumber>
    </recommendedName>
    <alternativeName>
        <fullName evidence="1">ATP synthase F1 sector subunit alpha</fullName>
    </alternativeName>
    <alternativeName>
        <fullName evidence="1">F-ATPase subunit alpha</fullName>
    </alternativeName>
</protein>
<keyword id="KW-0066">ATP synthesis</keyword>
<keyword id="KW-0067">ATP-binding</keyword>
<keyword id="KW-0997">Cell inner membrane</keyword>
<keyword id="KW-1003">Cell membrane</keyword>
<keyword id="KW-0139">CF(1)</keyword>
<keyword id="KW-0375">Hydrogen ion transport</keyword>
<keyword id="KW-0406">Ion transport</keyword>
<keyword id="KW-0472">Membrane</keyword>
<keyword id="KW-0547">Nucleotide-binding</keyword>
<keyword id="KW-1185">Reference proteome</keyword>
<keyword id="KW-1278">Translocase</keyword>
<keyword id="KW-0813">Transport</keyword>
<proteinExistence type="inferred from homology"/>
<evidence type="ECO:0000255" key="1">
    <source>
        <dbReference type="HAMAP-Rule" id="MF_01346"/>
    </source>
</evidence>
<sequence length="503" mass="55793">MRISPGEITKVLEDRIKEFKEEIDLQETGRVVQIGDGIARVYGLNSVMADELVEFVETGVKGLAFNLEEDNVGVILLGPYSQIKEGHIVKRLKKIIEVPVGEELLGRVVNPLGEPLDGLGPVEAKHTRKIEIKAPGVIYRRPVNTPLQTGIKAIDAMIPIGRGQRELIIGDRQTGKTAIAIDTIINQKGKGVYCIYVAIGQKTAAVARIVDKLREFGAMEYTTVVVASASDPAPIQYIAPYAGCAMGEYFMYNSKDALVVYDDLSKHAAAYRQLSLLLRRPPGREAYPGDIFYLHSRLLERAARLDDKMGGGSLTALPIVETQANDVSAYIPTNVISITDGQIYLEPGLFYSGFRPAINVGLSVSRVGGSAQIRAMKQVAGMLRIDLAQFRELETFAQFASELDPATRAQIVRGQHLQELLKQDQYSPLPVEEQVVVLYAGVRGYLDELPVESVRKFEKEFLDYMRTSKSSLLKLISEKKELTQEVEDELKKSIQEFLEGWHE</sequence>
<feature type="chain" id="PRO_1000067720" description="ATP synthase subunit alpha">
    <location>
        <begin position="1"/>
        <end position="503"/>
    </location>
</feature>
<feature type="binding site" evidence="1">
    <location>
        <begin position="170"/>
        <end position="177"/>
    </location>
    <ligand>
        <name>ATP</name>
        <dbReference type="ChEBI" id="CHEBI:30616"/>
    </ligand>
</feature>
<feature type="site" description="Required for activity" evidence="1">
    <location>
        <position position="363"/>
    </location>
</feature>
<gene>
    <name evidence="1" type="primary">atpA</name>
    <name type="ordered locus">Tlet_0164</name>
</gene>
<accession>A8F3K0</accession>
<dbReference type="EC" id="7.1.2.2" evidence="1"/>
<dbReference type="EMBL" id="CP000812">
    <property type="protein sequence ID" value="ABV32734.1"/>
    <property type="molecule type" value="Genomic_DNA"/>
</dbReference>
<dbReference type="RefSeq" id="WP_012002215.1">
    <property type="nucleotide sequence ID" value="NZ_BSDV01000001.1"/>
</dbReference>
<dbReference type="SMR" id="A8F3K0"/>
<dbReference type="STRING" id="416591.Tlet_0164"/>
<dbReference type="KEGG" id="tle:Tlet_0164"/>
<dbReference type="eggNOG" id="COG0056">
    <property type="taxonomic scope" value="Bacteria"/>
</dbReference>
<dbReference type="HOGENOM" id="CLU_010091_2_1_0"/>
<dbReference type="OrthoDB" id="9803053at2"/>
<dbReference type="Proteomes" id="UP000002016">
    <property type="component" value="Chromosome"/>
</dbReference>
<dbReference type="GO" id="GO:0005886">
    <property type="term" value="C:plasma membrane"/>
    <property type="evidence" value="ECO:0007669"/>
    <property type="project" value="UniProtKB-SubCell"/>
</dbReference>
<dbReference type="GO" id="GO:0045259">
    <property type="term" value="C:proton-transporting ATP synthase complex"/>
    <property type="evidence" value="ECO:0007669"/>
    <property type="project" value="UniProtKB-KW"/>
</dbReference>
<dbReference type="GO" id="GO:0043531">
    <property type="term" value="F:ADP binding"/>
    <property type="evidence" value="ECO:0007669"/>
    <property type="project" value="TreeGrafter"/>
</dbReference>
<dbReference type="GO" id="GO:0005524">
    <property type="term" value="F:ATP binding"/>
    <property type="evidence" value="ECO:0007669"/>
    <property type="project" value="UniProtKB-UniRule"/>
</dbReference>
<dbReference type="GO" id="GO:0046933">
    <property type="term" value="F:proton-transporting ATP synthase activity, rotational mechanism"/>
    <property type="evidence" value="ECO:0007669"/>
    <property type="project" value="UniProtKB-UniRule"/>
</dbReference>
<dbReference type="CDD" id="cd18113">
    <property type="entry name" value="ATP-synt_F1_alpha_C"/>
    <property type="match status" value="1"/>
</dbReference>
<dbReference type="CDD" id="cd18116">
    <property type="entry name" value="ATP-synt_F1_alpha_N"/>
    <property type="match status" value="1"/>
</dbReference>
<dbReference type="CDD" id="cd01132">
    <property type="entry name" value="F1-ATPase_alpha_CD"/>
    <property type="match status" value="1"/>
</dbReference>
<dbReference type="FunFam" id="1.20.150.20:FF:000001">
    <property type="entry name" value="ATP synthase subunit alpha"/>
    <property type="match status" value="1"/>
</dbReference>
<dbReference type="FunFam" id="2.40.30.20:FF:000001">
    <property type="entry name" value="ATP synthase subunit alpha"/>
    <property type="match status" value="1"/>
</dbReference>
<dbReference type="FunFam" id="3.40.50.300:FF:000002">
    <property type="entry name" value="ATP synthase subunit alpha"/>
    <property type="match status" value="1"/>
</dbReference>
<dbReference type="Gene3D" id="2.40.30.20">
    <property type="match status" value="1"/>
</dbReference>
<dbReference type="Gene3D" id="1.20.150.20">
    <property type="entry name" value="ATP synthase alpha/beta chain, C-terminal domain"/>
    <property type="match status" value="1"/>
</dbReference>
<dbReference type="Gene3D" id="3.40.50.300">
    <property type="entry name" value="P-loop containing nucleotide triphosphate hydrolases"/>
    <property type="match status" value="1"/>
</dbReference>
<dbReference type="HAMAP" id="MF_01346">
    <property type="entry name" value="ATP_synth_alpha_bact"/>
    <property type="match status" value="1"/>
</dbReference>
<dbReference type="InterPro" id="IPR023366">
    <property type="entry name" value="ATP_synth_asu-like_sf"/>
</dbReference>
<dbReference type="InterPro" id="IPR000793">
    <property type="entry name" value="ATP_synth_asu_C"/>
</dbReference>
<dbReference type="InterPro" id="IPR038376">
    <property type="entry name" value="ATP_synth_asu_C_sf"/>
</dbReference>
<dbReference type="InterPro" id="IPR033732">
    <property type="entry name" value="ATP_synth_F1_a_nt-bd_dom"/>
</dbReference>
<dbReference type="InterPro" id="IPR005294">
    <property type="entry name" value="ATP_synth_F1_asu"/>
</dbReference>
<dbReference type="InterPro" id="IPR020003">
    <property type="entry name" value="ATPase_a/bsu_AS"/>
</dbReference>
<dbReference type="InterPro" id="IPR004100">
    <property type="entry name" value="ATPase_F1/V1/A1_a/bsu_N"/>
</dbReference>
<dbReference type="InterPro" id="IPR036121">
    <property type="entry name" value="ATPase_F1/V1/A1_a/bsu_N_sf"/>
</dbReference>
<dbReference type="InterPro" id="IPR000194">
    <property type="entry name" value="ATPase_F1/V1/A1_a/bsu_nucl-bd"/>
</dbReference>
<dbReference type="InterPro" id="IPR027417">
    <property type="entry name" value="P-loop_NTPase"/>
</dbReference>
<dbReference type="NCBIfam" id="TIGR00962">
    <property type="entry name" value="atpA"/>
    <property type="match status" value="1"/>
</dbReference>
<dbReference type="NCBIfam" id="NF009884">
    <property type="entry name" value="PRK13343.1"/>
    <property type="match status" value="1"/>
</dbReference>
<dbReference type="PANTHER" id="PTHR48082">
    <property type="entry name" value="ATP SYNTHASE SUBUNIT ALPHA, MITOCHONDRIAL"/>
    <property type="match status" value="1"/>
</dbReference>
<dbReference type="PANTHER" id="PTHR48082:SF2">
    <property type="entry name" value="ATP SYNTHASE SUBUNIT ALPHA, MITOCHONDRIAL"/>
    <property type="match status" value="1"/>
</dbReference>
<dbReference type="Pfam" id="PF00006">
    <property type="entry name" value="ATP-synt_ab"/>
    <property type="match status" value="1"/>
</dbReference>
<dbReference type="Pfam" id="PF00306">
    <property type="entry name" value="ATP-synt_ab_C"/>
    <property type="match status" value="1"/>
</dbReference>
<dbReference type="Pfam" id="PF02874">
    <property type="entry name" value="ATP-synt_ab_N"/>
    <property type="match status" value="1"/>
</dbReference>
<dbReference type="PIRSF" id="PIRSF039088">
    <property type="entry name" value="F_ATPase_subunit_alpha"/>
    <property type="match status" value="1"/>
</dbReference>
<dbReference type="SUPFAM" id="SSF47917">
    <property type="entry name" value="C-terminal domain of alpha and beta subunits of F1 ATP synthase"/>
    <property type="match status" value="1"/>
</dbReference>
<dbReference type="SUPFAM" id="SSF50615">
    <property type="entry name" value="N-terminal domain of alpha and beta subunits of F1 ATP synthase"/>
    <property type="match status" value="1"/>
</dbReference>
<dbReference type="SUPFAM" id="SSF52540">
    <property type="entry name" value="P-loop containing nucleoside triphosphate hydrolases"/>
    <property type="match status" value="1"/>
</dbReference>
<dbReference type="PROSITE" id="PS00152">
    <property type="entry name" value="ATPASE_ALPHA_BETA"/>
    <property type="match status" value="1"/>
</dbReference>
<reference key="1">
    <citation type="submission" date="2007-08" db="EMBL/GenBank/DDBJ databases">
        <title>Complete sequence of Thermotoga lettingae TMO.</title>
        <authorList>
            <consortium name="US DOE Joint Genome Institute"/>
            <person name="Copeland A."/>
            <person name="Lucas S."/>
            <person name="Lapidus A."/>
            <person name="Barry K."/>
            <person name="Glavina del Rio T."/>
            <person name="Dalin E."/>
            <person name="Tice H."/>
            <person name="Pitluck S."/>
            <person name="Foster B."/>
            <person name="Bruce D."/>
            <person name="Schmutz J."/>
            <person name="Larimer F."/>
            <person name="Land M."/>
            <person name="Hauser L."/>
            <person name="Kyrpides N."/>
            <person name="Mikhailova N."/>
            <person name="Nelson K."/>
            <person name="Gogarten J.P."/>
            <person name="Noll K."/>
            <person name="Richardson P."/>
        </authorList>
    </citation>
    <scope>NUCLEOTIDE SEQUENCE [LARGE SCALE GENOMIC DNA]</scope>
    <source>
        <strain>ATCC BAA-301 / DSM 14385 / NBRC 107922 / TMO</strain>
    </source>
</reference>
<organism>
    <name type="scientific">Pseudothermotoga lettingae (strain ATCC BAA-301 / DSM 14385 / NBRC 107922 / TMO)</name>
    <name type="common">Thermotoga lettingae</name>
    <dbReference type="NCBI Taxonomy" id="416591"/>
    <lineage>
        <taxon>Bacteria</taxon>
        <taxon>Thermotogati</taxon>
        <taxon>Thermotogota</taxon>
        <taxon>Thermotogae</taxon>
        <taxon>Thermotogales</taxon>
        <taxon>Thermotogaceae</taxon>
        <taxon>Pseudothermotoga</taxon>
    </lineage>
</organism>
<name>ATPA_PSELT</name>